<evidence type="ECO:0000255" key="1">
    <source>
        <dbReference type="HAMAP-Rule" id="MF_00022"/>
    </source>
</evidence>
<name>SYE_AKKM8</name>
<gene>
    <name evidence="1" type="primary">gltX</name>
    <name type="ordered locus">Amuc_1888</name>
</gene>
<sequence>MSLVRTRFAPSPTGYLHIGGARTALFNWLFARKMGGTFILRIEDTDNARNTEEATRAIFTGMEWLGLDWDEGPMKGGDCGPYFQSQRNDIYDAYFKKLQDAGRVYEDEGAWRFRFDRSKPVTFHDLICGNITIDYRDASNTPDMAIRRADGSYIFHFVNVVDDIEMKMTHVIRGEDHIMNTPKHIQLFEAFGVTPPVFAHMPLILNQDGSKMSKRDVGAALGTYPEEGFLPEGVMNFLALLGWSPKDDTEIFSPQELIGRFSLEAVNHSAAKFDITKCRWVNQQHIIALPAEEFALRARPFCLKAGLPDSPILDAAIATVQTKVQTLAEVPDKIRFFFDLGMDPEAVSKVQPEALELLFKLADRLEQEPEWDGHELIGVLKAFAKENGVKMGAVMFPARVALTGLSGGPDLSSVFSLLGREETVRRIRSFSLD</sequence>
<comment type="function">
    <text evidence="1">Catalyzes the attachment of glutamate to tRNA(Glu) in a two-step reaction: glutamate is first activated by ATP to form Glu-AMP and then transferred to the acceptor end of tRNA(Glu).</text>
</comment>
<comment type="catalytic activity">
    <reaction evidence="1">
        <text>tRNA(Glu) + L-glutamate + ATP = L-glutamyl-tRNA(Glu) + AMP + diphosphate</text>
        <dbReference type="Rhea" id="RHEA:23540"/>
        <dbReference type="Rhea" id="RHEA-COMP:9663"/>
        <dbReference type="Rhea" id="RHEA-COMP:9680"/>
        <dbReference type="ChEBI" id="CHEBI:29985"/>
        <dbReference type="ChEBI" id="CHEBI:30616"/>
        <dbReference type="ChEBI" id="CHEBI:33019"/>
        <dbReference type="ChEBI" id="CHEBI:78442"/>
        <dbReference type="ChEBI" id="CHEBI:78520"/>
        <dbReference type="ChEBI" id="CHEBI:456215"/>
        <dbReference type="EC" id="6.1.1.17"/>
    </reaction>
</comment>
<comment type="subunit">
    <text evidence="1">Monomer.</text>
</comment>
<comment type="subcellular location">
    <subcellularLocation>
        <location evidence="1">Cytoplasm</location>
    </subcellularLocation>
</comment>
<comment type="similarity">
    <text evidence="1">Belongs to the class-I aminoacyl-tRNA synthetase family. Glutamate--tRNA ligase type 1 subfamily.</text>
</comment>
<accession>B2UN91</accession>
<dbReference type="EC" id="6.1.1.17" evidence="1"/>
<dbReference type="EMBL" id="CP001071">
    <property type="protein sequence ID" value="ACD05702.1"/>
    <property type="molecule type" value="Genomic_DNA"/>
</dbReference>
<dbReference type="RefSeq" id="WP_012420916.1">
    <property type="nucleotide sequence ID" value="NC_010655.1"/>
</dbReference>
<dbReference type="SMR" id="B2UN91"/>
<dbReference type="STRING" id="349741.Amuc_1888"/>
<dbReference type="PaxDb" id="349741-Amuc_1888"/>
<dbReference type="KEGG" id="amu:Amuc_1888"/>
<dbReference type="eggNOG" id="COG0008">
    <property type="taxonomic scope" value="Bacteria"/>
</dbReference>
<dbReference type="eggNOG" id="COG1384">
    <property type="taxonomic scope" value="Bacteria"/>
</dbReference>
<dbReference type="HOGENOM" id="CLU_015768_6_3_0"/>
<dbReference type="OrthoDB" id="9807503at2"/>
<dbReference type="BioCyc" id="AMUC349741:G1GBX-2013-MONOMER"/>
<dbReference type="Proteomes" id="UP000001031">
    <property type="component" value="Chromosome"/>
</dbReference>
<dbReference type="GO" id="GO:0005829">
    <property type="term" value="C:cytosol"/>
    <property type="evidence" value="ECO:0007669"/>
    <property type="project" value="TreeGrafter"/>
</dbReference>
<dbReference type="GO" id="GO:0005524">
    <property type="term" value="F:ATP binding"/>
    <property type="evidence" value="ECO:0007669"/>
    <property type="project" value="UniProtKB-UniRule"/>
</dbReference>
<dbReference type="GO" id="GO:0004818">
    <property type="term" value="F:glutamate-tRNA ligase activity"/>
    <property type="evidence" value="ECO:0007669"/>
    <property type="project" value="UniProtKB-UniRule"/>
</dbReference>
<dbReference type="GO" id="GO:0000049">
    <property type="term" value="F:tRNA binding"/>
    <property type="evidence" value="ECO:0007669"/>
    <property type="project" value="InterPro"/>
</dbReference>
<dbReference type="GO" id="GO:0008270">
    <property type="term" value="F:zinc ion binding"/>
    <property type="evidence" value="ECO:0007669"/>
    <property type="project" value="InterPro"/>
</dbReference>
<dbReference type="GO" id="GO:0006424">
    <property type="term" value="P:glutamyl-tRNA aminoacylation"/>
    <property type="evidence" value="ECO:0007669"/>
    <property type="project" value="UniProtKB-UniRule"/>
</dbReference>
<dbReference type="CDD" id="cd00808">
    <property type="entry name" value="GluRS_core"/>
    <property type="match status" value="1"/>
</dbReference>
<dbReference type="Gene3D" id="1.10.10.350">
    <property type="match status" value="1"/>
</dbReference>
<dbReference type="Gene3D" id="3.40.50.620">
    <property type="entry name" value="HUPs"/>
    <property type="match status" value="2"/>
</dbReference>
<dbReference type="HAMAP" id="MF_00022">
    <property type="entry name" value="Glu_tRNA_synth_type1"/>
    <property type="match status" value="1"/>
</dbReference>
<dbReference type="InterPro" id="IPR045462">
    <property type="entry name" value="aa-tRNA-synth_I_cd-bd"/>
</dbReference>
<dbReference type="InterPro" id="IPR020751">
    <property type="entry name" value="aa-tRNA-synth_I_codon-bd_sub2"/>
</dbReference>
<dbReference type="InterPro" id="IPR001412">
    <property type="entry name" value="aa-tRNA-synth_I_CS"/>
</dbReference>
<dbReference type="InterPro" id="IPR008925">
    <property type="entry name" value="aa_tRNA-synth_I_cd-bd_sf"/>
</dbReference>
<dbReference type="InterPro" id="IPR004527">
    <property type="entry name" value="Glu-tRNA-ligase_bac/mito"/>
</dbReference>
<dbReference type="InterPro" id="IPR000924">
    <property type="entry name" value="Glu/Gln-tRNA-synth"/>
</dbReference>
<dbReference type="InterPro" id="IPR020058">
    <property type="entry name" value="Glu/Gln-tRNA-synth_Ib_cat-dom"/>
</dbReference>
<dbReference type="InterPro" id="IPR049940">
    <property type="entry name" value="GluQ/Sye"/>
</dbReference>
<dbReference type="InterPro" id="IPR033910">
    <property type="entry name" value="GluRS_core"/>
</dbReference>
<dbReference type="InterPro" id="IPR014729">
    <property type="entry name" value="Rossmann-like_a/b/a_fold"/>
</dbReference>
<dbReference type="PANTHER" id="PTHR43311">
    <property type="entry name" value="GLUTAMATE--TRNA LIGASE"/>
    <property type="match status" value="1"/>
</dbReference>
<dbReference type="PANTHER" id="PTHR43311:SF2">
    <property type="entry name" value="GLUTAMATE--TRNA LIGASE, MITOCHONDRIAL-RELATED"/>
    <property type="match status" value="1"/>
</dbReference>
<dbReference type="Pfam" id="PF19269">
    <property type="entry name" value="Anticodon_2"/>
    <property type="match status" value="1"/>
</dbReference>
<dbReference type="Pfam" id="PF00749">
    <property type="entry name" value="tRNA-synt_1c"/>
    <property type="match status" value="2"/>
</dbReference>
<dbReference type="PRINTS" id="PR00987">
    <property type="entry name" value="TRNASYNTHGLU"/>
</dbReference>
<dbReference type="SUPFAM" id="SSF48163">
    <property type="entry name" value="An anticodon-binding domain of class I aminoacyl-tRNA synthetases"/>
    <property type="match status" value="1"/>
</dbReference>
<dbReference type="SUPFAM" id="SSF52374">
    <property type="entry name" value="Nucleotidylyl transferase"/>
    <property type="match status" value="1"/>
</dbReference>
<dbReference type="PROSITE" id="PS00178">
    <property type="entry name" value="AA_TRNA_LIGASE_I"/>
    <property type="match status" value="1"/>
</dbReference>
<proteinExistence type="inferred from homology"/>
<reference key="1">
    <citation type="journal article" date="2011" name="PLoS ONE">
        <title>The genome of Akkermansia muciniphila, a dedicated intestinal mucin degrader, and its use in exploring intestinal metagenomes.</title>
        <authorList>
            <person name="van Passel M.W."/>
            <person name="Kant R."/>
            <person name="Zoetendal E.G."/>
            <person name="Plugge C.M."/>
            <person name="Derrien M."/>
            <person name="Malfatti S.A."/>
            <person name="Chain P.S."/>
            <person name="Woyke T."/>
            <person name="Palva A."/>
            <person name="de Vos W.M."/>
            <person name="Smidt H."/>
        </authorList>
    </citation>
    <scope>NUCLEOTIDE SEQUENCE [LARGE SCALE GENOMIC DNA]</scope>
    <source>
        <strain>ATCC BAA-835 / DSM 22959 / JCM 33894 / BCRC 81048 / CCUG 64013 / CIP 107961 / Muc</strain>
    </source>
</reference>
<protein>
    <recommendedName>
        <fullName evidence="1">Glutamate--tRNA ligase</fullName>
        <ecNumber evidence="1">6.1.1.17</ecNumber>
    </recommendedName>
    <alternativeName>
        <fullName evidence="1">Glutamyl-tRNA synthetase</fullName>
        <shortName evidence="1">GluRS</shortName>
    </alternativeName>
</protein>
<feature type="chain" id="PRO_0000367604" description="Glutamate--tRNA ligase">
    <location>
        <begin position="1"/>
        <end position="433"/>
    </location>
</feature>
<feature type="short sequence motif" description="'HIGH' region" evidence="1">
    <location>
        <begin position="10"/>
        <end position="20"/>
    </location>
</feature>
<feature type="short sequence motif" description="'KMSKS' region" evidence="1">
    <location>
        <begin position="211"/>
        <end position="215"/>
    </location>
</feature>
<feature type="binding site" evidence="1">
    <location>
        <position position="214"/>
    </location>
    <ligand>
        <name>ATP</name>
        <dbReference type="ChEBI" id="CHEBI:30616"/>
    </ligand>
</feature>
<keyword id="KW-0030">Aminoacyl-tRNA synthetase</keyword>
<keyword id="KW-0067">ATP-binding</keyword>
<keyword id="KW-0963">Cytoplasm</keyword>
<keyword id="KW-0436">Ligase</keyword>
<keyword id="KW-0547">Nucleotide-binding</keyword>
<keyword id="KW-0648">Protein biosynthesis</keyword>
<keyword id="KW-1185">Reference proteome</keyword>
<organism>
    <name type="scientific">Akkermansia muciniphila (strain ATCC BAA-835 / DSM 22959 / JCM 33894 / BCRC 81048 / CCUG 64013 / CIP 107961 / Muc)</name>
    <dbReference type="NCBI Taxonomy" id="349741"/>
    <lineage>
        <taxon>Bacteria</taxon>
        <taxon>Pseudomonadati</taxon>
        <taxon>Verrucomicrobiota</taxon>
        <taxon>Verrucomicrobiia</taxon>
        <taxon>Verrucomicrobiales</taxon>
        <taxon>Akkermansiaceae</taxon>
        <taxon>Akkermansia</taxon>
    </lineage>
</organism>